<protein>
    <recommendedName>
        <fullName evidence="1">Large ribosomal subunit protein uL24</fullName>
    </recommendedName>
    <alternativeName>
        <fullName evidence="2">50S ribosomal protein L24</fullName>
    </alternativeName>
</protein>
<proteinExistence type="inferred from homology"/>
<feature type="chain" id="PRO_0000355651" description="Large ribosomal subunit protein uL24">
    <location>
        <begin position="1"/>
        <end position="80"/>
    </location>
</feature>
<organism>
    <name type="scientific">Chlorobaculum parvum (strain DSM 263 / NCIMB 8327)</name>
    <name type="common">Chlorobium vibrioforme subsp. thiosulfatophilum</name>
    <dbReference type="NCBI Taxonomy" id="517417"/>
    <lineage>
        <taxon>Bacteria</taxon>
        <taxon>Pseudomonadati</taxon>
        <taxon>Chlorobiota</taxon>
        <taxon>Chlorobiia</taxon>
        <taxon>Chlorobiales</taxon>
        <taxon>Chlorobiaceae</taxon>
        <taxon>Chlorobaculum</taxon>
    </lineage>
</organism>
<comment type="function">
    <text evidence="1">One of two assembly initiator proteins, it binds directly to the 5'-end of the 23S rRNA, where it nucleates assembly of the 50S subunit.</text>
</comment>
<comment type="function">
    <text evidence="1">One of the proteins that surrounds the polypeptide exit tunnel on the outside of the subunit.</text>
</comment>
<comment type="subunit">
    <text evidence="1">Part of the 50S ribosomal subunit.</text>
</comment>
<comment type="similarity">
    <text evidence="1">Belongs to the universal ribosomal protein uL24 family.</text>
</comment>
<accession>B3QR73</accession>
<keyword id="KW-0687">Ribonucleoprotein</keyword>
<keyword id="KW-0689">Ribosomal protein</keyword>
<keyword id="KW-0694">RNA-binding</keyword>
<keyword id="KW-0699">rRNA-binding</keyword>
<sequence length="80" mass="8927">MKTGIKKIKLHVKKNDDVVVIAGNDKGKSGKVLKVFPQKGRVIVEGVNIRKRHMRPTQTSPQGSIIEREFPIHASNVKKS</sequence>
<evidence type="ECO:0000255" key="1">
    <source>
        <dbReference type="HAMAP-Rule" id="MF_01326"/>
    </source>
</evidence>
<evidence type="ECO:0000305" key="2"/>
<dbReference type="EMBL" id="CP001099">
    <property type="protein sequence ID" value="ACF10615.1"/>
    <property type="molecule type" value="Genomic_DNA"/>
</dbReference>
<dbReference type="RefSeq" id="WP_012501450.1">
    <property type="nucleotide sequence ID" value="NC_011027.1"/>
</dbReference>
<dbReference type="SMR" id="B3QR73"/>
<dbReference type="STRING" id="517417.Cpar_0188"/>
<dbReference type="KEGG" id="cpc:Cpar_0188"/>
<dbReference type="eggNOG" id="COG0198">
    <property type="taxonomic scope" value="Bacteria"/>
</dbReference>
<dbReference type="HOGENOM" id="CLU_093315_3_0_10"/>
<dbReference type="OrthoDB" id="9807419at2"/>
<dbReference type="Proteomes" id="UP000008811">
    <property type="component" value="Chromosome"/>
</dbReference>
<dbReference type="GO" id="GO:1990904">
    <property type="term" value="C:ribonucleoprotein complex"/>
    <property type="evidence" value="ECO:0007669"/>
    <property type="project" value="UniProtKB-KW"/>
</dbReference>
<dbReference type="GO" id="GO:0005840">
    <property type="term" value="C:ribosome"/>
    <property type="evidence" value="ECO:0007669"/>
    <property type="project" value="UniProtKB-KW"/>
</dbReference>
<dbReference type="GO" id="GO:0019843">
    <property type="term" value="F:rRNA binding"/>
    <property type="evidence" value="ECO:0007669"/>
    <property type="project" value="UniProtKB-UniRule"/>
</dbReference>
<dbReference type="GO" id="GO:0003735">
    <property type="term" value="F:structural constituent of ribosome"/>
    <property type="evidence" value="ECO:0007669"/>
    <property type="project" value="InterPro"/>
</dbReference>
<dbReference type="GO" id="GO:0006412">
    <property type="term" value="P:translation"/>
    <property type="evidence" value="ECO:0007669"/>
    <property type="project" value="UniProtKB-UniRule"/>
</dbReference>
<dbReference type="CDD" id="cd06089">
    <property type="entry name" value="KOW_RPL26"/>
    <property type="match status" value="1"/>
</dbReference>
<dbReference type="Gene3D" id="2.30.30.30">
    <property type="match status" value="1"/>
</dbReference>
<dbReference type="HAMAP" id="MF_01326_B">
    <property type="entry name" value="Ribosomal_uL24_B"/>
    <property type="match status" value="1"/>
</dbReference>
<dbReference type="InterPro" id="IPR005824">
    <property type="entry name" value="KOW"/>
</dbReference>
<dbReference type="InterPro" id="IPR014722">
    <property type="entry name" value="Rib_uL2_dom2"/>
</dbReference>
<dbReference type="InterPro" id="IPR003256">
    <property type="entry name" value="Ribosomal_uL24"/>
</dbReference>
<dbReference type="InterPro" id="IPR005825">
    <property type="entry name" value="Ribosomal_uL24_CS"/>
</dbReference>
<dbReference type="InterPro" id="IPR041988">
    <property type="entry name" value="Ribosomal_uL24_KOW"/>
</dbReference>
<dbReference type="InterPro" id="IPR008991">
    <property type="entry name" value="Translation_prot_SH3-like_sf"/>
</dbReference>
<dbReference type="NCBIfam" id="TIGR01079">
    <property type="entry name" value="rplX_bact"/>
    <property type="match status" value="1"/>
</dbReference>
<dbReference type="PANTHER" id="PTHR12903">
    <property type="entry name" value="MITOCHONDRIAL RIBOSOMAL PROTEIN L24"/>
    <property type="match status" value="1"/>
</dbReference>
<dbReference type="Pfam" id="PF00467">
    <property type="entry name" value="KOW"/>
    <property type="match status" value="1"/>
</dbReference>
<dbReference type="Pfam" id="PF17136">
    <property type="entry name" value="ribosomal_L24"/>
    <property type="match status" value="1"/>
</dbReference>
<dbReference type="SMART" id="SM00739">
    <property type="entry name" value="KOW"/>
    <property type="match status" value="1"/>
</dbReference>
<dbReference type="SUPFAM" id="SSF50104">
    <property type="entry name" value="Translation proteins SH3-like domain"/>
    <property type="match status" value="1"/>
</dbReference>
<dbReference type="PROSITE" id="PS01108">
    <property type="entry name" value="RIBOSOMAL_L24"/>
    <property type="match status" value="1"/>
</dbReference>
<name>RL24_CHLP8</name>
<gene>
    <name evidence="1" type="primary">rplX</name>
    <name type="ordered locus">Cpar_0188</name>
</gene>
<reference key="1">
    <citation type="submission" date="2008-06" db="EMBL/GenBank/DDBJ databases">
        <title>Complete sequence of Chlorobaculum parvum NCIB 8327.</title>
        <authorList>
            <consortium name="US DOE Joint Genome Institute"/>
            <person name="Lucas S."/>
            <person name="Copeland A."/>
            <person name="Lapidus A."/>
            <person name="Glavina del Rio T."/>
            <person name="Dalin E."/>
            <person name="Tice H."/>
            <person name="Bruce D."/>
            <person name="Goodwin L."/>
            <person name="Pitluck S."/>
            <person name="Schmutz J."/>
            <person name="Larimer F."/>
            <person name="Land M."/>
            <person name="Hauser L."/>
            <person name="Kyrpides N."/>
            <person name="Mikhailova N."/>
            <person name="Zhao F."/>
            <person name="Li T."/>
            <person name="Liu Z."/>
            <person name="Overmann J."/>
            <person name="Bryant D.A."/>
            <person name="Richardson P."/>
        </authorList>
    </citation>
    <scope>NUCLEOTIDE SEQUENCE [LARGE SCALE GENOMIC DNA]</scope>
    <source>
        <strain>DSM 263 / NCIMB 8327</strain>
    </source>
</reference>